<protein>
    <recommendedName>
        <fullName evidence="1">Arginine repressor</fullName>
    </recommendedName>
</protein>
<feature type="chain" id="PRO_1000097887" description="Arginine repressor">
    <location>
        <begin position="1"/>
        <end position="156"/>
    </location>
</feature>
<proteinExistence type="inferred from homology"/>
<evidence type="ECO:0000255" key="1">
    <source>
        <dbReference type="HAMAP-Rule" id="MF_00173"/>
    </source>
</evidence>
<dbReference type="EMBL" id="CP001127">
    <property type="protein sequence ID" value="ACF91422.1"/>
    <property type="molecule type" value="Genomic_DNA"/>
</dbReference>
<dbReference type="RefSeq" id="WP_001257852.1">
    <property type="nucleotide sequence ID" value="NC_011094.1"/>
</dbReference>
<dbReference type="SMR" id="B4TWL0"/>
<dbReference type="KEGG" id="sew:SeSA_A3552"/>
<dbReference type="HOGENOM" id="CLU_097103_2_0_6"/>
<dbReference type="UniPathway" id="UPA00068"/>
<dbReference type="Proteomes" id="UP000001865">
    <property type="component" value="Chromosome"/>
</dbReference>
<dbReference type="GO" id="GO:0005737">
    <property type="term" value="C:cytoplasm"/>
    <property type="evidence" value="ECO:0007669"/>
    <property type="project" value="UniProtKB-SubCell"/>
</dbReference>
<dbReference type="GO" id="GO:0034618">
    <property type="term" value="F:arginine binding"/>
    <property type="evidence" value="ECO:0007669"/>
    <property type="project" value="InterPro"/>
</dbReference>
<dbReference type="GO" id="GO:0003677">
    <property type="term" value="F:DNA binding"/>
    <property type="evidence" value="ECO:0007669"/>
    <property type="project" value="UniProtKB-KW"/>
</dbReference>
<dbReference type="GO" id="GO:0003700">
    <property type="term" value="F:DNA-binding transcription factor activity"/>
    <property type="evidence" value="ECO:0007669"/>
    <property type="project" value="UniProtKB-UniRule"/>
</dbReference>
<dbReference type="GO" id="GO:0006526">
    <property type="term" value="P:L-arginine biosynthetic process"/>
    <property type="evidence" value="ECO:0007669"/>
    <property type="project" value="UniProtKB-UniPathway"/>
</dbReference>
<dbReference type="GO" id="GO:0051259">
    <property type="term" value="P:protein complex oligomerization"/>
    <property type="evidence" value="ECO:0007669"/>
    <property type="project" value="InterPro"/>
</dbReference>
<dbReference type="GO" id="GO:1900079">
    <property type="term" value="P:regulation of arginine biosynthetic process"/>
    <property type="evidence" value="ECO:0007669"/>
    <property type="project" value="UniProtKB-UniRule"/>
</dbReference>
<dbReference type="FunFam" id="1.10.10.10:FF:000074">
    <property type="entry name" value="Arginine repressor"/>
    <property type="match status" value="1"/>
</dbReference>
<dbReference type="FunFam" id="3.30.1360.40:FF:000004">
    <property type="entry name" value="Arginine repressor"/>
    <property type="match status" value="1"/>
</dbReference>
<dbReference type="Gene3D" id="3.30.1360.40">
    <property type="match status" value="1"/>
</dbReference>
<dbReference type="Gene3D" id="1.10.10.10">
    <property type="entry name" value="Winged helix-like DNA-binding domain superfamily/Winged helix DNA-binding domain"/>
    <property type="match status" value="1"/>
</dbReference>
<dbReference type="HAMAP" id="MF_00173">
    <property type="entry name" value="Arg_repressor"/>
    <property type="match status" value="1"/>
</dbReference>
<dbReference type="InterPro" id="IPR001669">
    <property type="entry name" value="Arg_repress"/>
</dbReference>
<dbReference type="InterPro" id="IPR020899">
    <property type="entry name" value="Arg_repress_C"/>
</dbReference>
<dbReference type="InterPro" id="IPR036251">
    <property type="entry name" value="Arg_repress_C_sf"/>
</dbReference>
<dbReference type="InterPro" id="IPR020900">
    <property type="entry name" value="Arg_repress_DNA-bd"/>
</dbReference>
<dbReference type="InterPro" id="IPR036388">
    <property type="entry name" value="WH-like_DNA-bd_sf"/>
</dbReference>
<dbReference type="InterPro" id="IPR036390">
    <property type="entry name" value="WH_DNA-bd_sf"/>
</dbReference>
<dbReference type="NCBIfam" id="TIGR01529">
    <property type="entry name" value="argR_whole"/>
    <property type="match status" value="1"/>
</dbReference>
<dbReference type="NCBIfam" id="NF003457">
    <property type="entry name" value="PRK05066.1"/>
    <property type="match status" value="1"/>
</dbReference>
<dbReference type="PANTHER" id="PTHR34471">
    <property type="entry name" value="ARGININE REPRESSOR"/>
    <property type="match status" value="1"/>
</dbReference>
<dbReference type="PANTHER" id="PTHR34471:SF1">
    <property type="entry name" value="ARGININE REPRESSOR"/>
    <property type="match status" value="1"/>
</dbReference>
<dbReference type="Pfam" id="PF01316">
    <property type="entry name" value="Arg_repressor"/>
    <property type="match status" value="1"/>
</dbReference>
<dbReference type="Pfam" id="PF02863">
    <property type="entry name" value="Arg_repressor_C"/>
    <property type="match status" value="1"/>
</dbReference>
<dbReference type="PRINTS" id="PR01467">
    <property type="entry name" value="ARGREPRESSOR"/>
</dbReference>
<dbReference type="SUPFAM" id="SSF55252">
    <property type="entry name" value="C-terminal domain of arginine repressor"/>
    <property type="match status" value="1"/>
</dbReference>
<dbReference type="SUPFAM" id="SSF46785">
    <property type="entry name" value="Winged helix' DNA-binding domain"/>
    <property type="match status" value="1"/>
</dbReference>
<organism>
    <name type="scientific">Salmonella schwarzengrund (strain CVM19633)</name>
    <dbReference type="NCBI Taxonomy" id="439843"/>
    <lineage>
        <taxon>Bacteria</taxon>
        <taxon>Pseudomonadati</taxon>
        <taxon>Pseudomonadota</taxon>
        <taxon>Gammaproteobacteria</taxon>
        <taxon>Enterobacterales</taxon>
        <taxon>Enterobacteriaceae</taxon>
        <taxon>Salmonella</taxon>
    </lineage>
</organism>
<keyword id="KW-0028">Amino-acid biosynthesis</keyword>
<keyword id="KW-0055">Arginine biosynthesis</keyword>
<keyword id="KW-0963">Cytoplasm</keyword>
<keyword id="KW-0238">DNA-binding</keyword>
<keyword id="KW-0678">Repressor</keyword>
<keyword id="KW-0804">Transcription</keyword>
<keyword id="KW-0805">Transcription regulation</keyword>
<reference key="1">
    <citation type="journal article" date="2011" name="J. Bacteriol.">
        <title>Comparative genomics of 28 Salmonella enterica isolates: evidence for CRISPR-mediated adaptive sublineage evolution.</title>
        <authorList>
            <person name="Fricke W.F."/>
            <person name="Mammel M.K."/>
            <person name="McDermott P.F."/>
            <person name="Tartera C."/>
            <person name="White D.G."/>
            <person name="Leclerc J.E."/>
            <person name="Ravel J."/>
            <person name="Cebula T.A."/>
        </authorList>
    </citation>
    <scope>NUCLEOTIDE SEQUENCE [LARGE SCALE GENOMIC DNA]</scope>
    <source>
        <strain>CVM19633</strain>
    </source>
</reference>
<accession>B4TWL0</accession>
<comment type="function">
    <text evidence="1">Regulates arginine biosynthesis genes.</text>
</comment>
<comment type="pathway">
    <text>Amino-acid biosynthesis; L-arginine biosynthesis [regulation].</text>
</comment>
<comment type="subcellular location">
    <subcellularLocation>
        <location evidence="1">Cytoplasm</location>
    </subcellularLocation>
</comment>
<comment type="similarity">
    <text evidence="1">Belongs to the ArgR family.</text>
</comment>
<sequence length="156" mass="17066">MRSSAKQEELVRAFKALLKEEKFSSQGEIVLALQDQGFENINQSKVSRMLTKFGAVRTRNAKMEMVYCLPAELGVPTTSSPLKNLVLDIDYNDAVVVIHTSPGAAQLIARLLDSLGKAEGILGTIAGDDTIFTTPASGFSVRDLYEAILELFEQEL</sequence>
<gene>
    <name evidence="1" type="primary">argR</name>
    <name type="ordered locus">SeSA_A3552</name>
</gene>
<name>ARGR_SALSV</name>